<protein>
    <recommendedName>
        <fullName evidence="1">Small ribosomal subunit protein uS8</fullName>
    </recommendedName>
    <alternativeName>
        <fullName evidence="2">30S ribosomal protein S8</fullName>
    </alternativeName>
</protein>
<sequence>MSMNDPLSDMIARIKNAATRKRAKVATPASKLRARVLDVLADEGYIRGYSLVEKPGAFPEFEIELKYFDGEPVIAEIARVSKPGRRVYSSIKDLKPIKNGLGISILSTPKGVMSDSAARDANVGGEVLCRVY</sequence>
<organism>
    <name type="scientific">Caulobacter sp. (strain K31)</name>
    <dbReference type="NCBI Taxonomy" id="366602"/>
    <lineage>
        <taxon>Bacteria</taxon>
        <taxon>Pseudomonadati</taxon>
        <taxon>Pseudomonadota</taxon>
        <taxon>Alphaproteobacteria</taxon>
        <taxon>Caulobacterales</taxon>
        <taxon>Caulobacteraceae</taxon>
        <taxon>Caulobacter</taxon>
    </lineage>
</organism>
<comment type="function">
    <text evidence="1">One of the primary rRNA binding proteins, it binds directly to 16S rRNA central domain where it helps coordinate assembly of the platform of the 30S subunit.</text>
</comment>
<comment type="subunit">
    <text evidence="1">Part of the 30S ribosomal subunit. Contacts proteins S5 and S12.</text>
</comment>
<comment type="similarity">
    <text evidence="1">Belongs to the universal ribosomal protein uS8 family.</text>
</comment>
<gene>
    <name evidence="1" type="primary">rpsH</name>
    <name type="ordered locus">Caul_1628</name>
</gene>
<feature type="chain" id="PRO_1000085914" description="Small ribosomal subunit protein uS8">
    <location>
        <begin position="1"/>
        <end position="132"/>
    </location>
</feature>
<dbReference type="EMBL" id="CP000927">
    <property type="protein sequence ID" value="ABZ70757.1"/>
    <property type="molecule type" value="Genomic_DNA"/>
</dbReference>
<dbReference type="SMR" id="B0T2D6"/>
<dbReference type="STRING" id="366602.Caul_1628"/>
<dbReference type="KEGG" id="cak:Caul_1628"/>
<dbReference type="eggNOG" id="COG0096">
    <property type="taxonomic scope" value="Bacteria"/>
</dbReference>
<dbReference type="HOGENOM" id="CLU_098428_0_0_5"/>
<dbReference type="OrthoDB" id="9802617at2"/>
<dbReference type="GO" id="GO:1990904">
    <property type="term" value="C:ribonucleoprotein complex"/>
    <property type="evidence" value="ECO:0007669"/>
    <property type="project" value="UniProtKB-KW"/>
</dbReference>
<dbReference type="GO" id="GO:0005840">
    <property type="term" value="C:ribosome"/>
    <property type="evidence" value="ECO:0007669"/>
    <property type="project" value="UniProtKB-KW"/>
</dbReference>
<dbReference type="GO" id="GO:0019843">
    <property type="term" value="F:rRNA binding"/>
    <property type="evidence" value="ECO:0007669"/>
    <property type="project" value="UniProtKB-UniRule"/>
</dbReference>
<dbReference type="GO" id="GO:0003735">
    <property type="term" value="F:structural constituent of ribosome"/>
    <property type="evidence" value="ECO:0007669"/>
    <property type="project" value="InterPro"/>
</dbReference>
<dbReference type="GO" id="GO:0006412">
    <property type="term" value="P:translation"/>
    <property type="evidence" value="ECO:0007669"/>
    <property type="project" value="UniProtKB-UniRule"/>
</dbReference>
<dbReference type="FunFam" id="3.30.1490.10:FF:000001">
    <property type="entry name" value="30S ribosomal protein S8"/>
    <property type="match status" value="1"/>
</dbReference>
<dbReference type="Gene3D" id="3.30.1370.30">
    <property type="match status" value="1"/>
</dbReference>
<dbReference type="Gene3D" id="3.30.1490.10">
    <property type="match status" value="1"/>
</dbReference>
<dbReference type="HAMAP" id="MF_01302_B">
    <property type="entry name" value="Ribosomal_uS8_B"/>
    <property type="match status" value="1"/>
</dbReference>
<dbReference type="InterPro" id="IPR000630">
    <property type="entry name" value="Ribosomal_uS8"/>
</dbReference>
<dbReference type="InterPro" id="IPR047863">
    <property type="entry name" value="Ribosomal_uS8_CS"/>
</dbReference>
<dbReference type="InterPro" id="IPR035987">
    <property type="entry name" value="Ribosomal_uS8_sf"/>
</dbReference>
<dbReference type="NCBIfam" id="NF001109">
    <property type="entry name" value="PRK00136.1"/>
    <property type="match status" value="1"/>
</dbReference>
<dbReference type="PANTHER" id="PTHR11758">
    <property type="entry name" value="40S RIBOSOMAL PROTEIN S15A"/>
    <property type="match status" value="1"/>
</dbReference>
<dbReference type="Pfam" id="PF00410">
    <property type="entry name" value="Ribosomal_S8"/>
    <property type="match status" value="1"/>
</dbReference>
<dbReference type="SUPFAM" id="SSF56047">
    <property type="entry name" value="Ribosomal protein S8"/>
    <property type="match status" value="1"/>
</dbReference>
<dbReference type="PROSITE" id="PS00053">
    <property type="entry name" value="RIBOSOMAL_S8"/>
    <property type="match status" value="1"/>
</dbReference>
<accession>B0T2D6</accession>
<reference key="1">
    <citation type="submission" date="2008-01" db="EMBL/GenBank/DDBJ databases">
        <title>Complete sequence of chromosome of Caulobacter sp. K31.</title>
        <authorList>
            <consortium name="US DOE Joint Genome Institute"/>
            <person name="Copeland A."/>
            <person name="Lucas S."/>
            <person name="Lapidus A."/>
            <person name="Barry K."/>
            <person name="Glavina del Rio T."/>
            <person name="Dalin E."/>
            <person name="Tice H."/>
            <person name="Pitluck S."/>
            <person name="Bruce D."/>
            <person name="Goodwin L."/>
            <person name="Thompson L.S."/>
            <person name="Brettin T."/>
            <person name="Detter J.C."/>
            <person name="Han C."/>
            <person name="Schmutz J."/>
            <person name="Larimer F."/>
            <person name="Land M."/>
            <person name="Hauser L."/>
            <person name="Kyrpides N."/>
            <person name="Kim E."/>
            <person name="Stephens C."/>
            <person name="Richardson P."/>
        </authorList>
    </citation>
    <scope>NUCLEOTIDE SEQUENCE [LARGE SCALE GENOMIC DNA]</scope>
    <source>
        <strain>K31</strain>
    </source>
</reference>
<proteinExistence type="inferred from homology"/>
<evidence type="ECO:0000255" key="1">
    <source>
        <dbReference type="HAMAP-Rule" id="MF_01302"/>
    </source>
</evidence>
<evidence type="ECO:0000305" key="2"/>
<name>RS8_CAUSK</name>
<keyword id="KW-0687">Ribonucleoprotein</keyword>
<keyword id="KW-0689">Ribosomal protein</keyword>
<keyword id="KW-0694">RNA-binding</keyword>
<keyword id="KW-0699">rRNA-binding</keyword>